<comment type="function">
    <text evidence="1">Catalyzes the ATP-dependent phosphorylation of L-homoserine to L-homoserine phosphate.</text>
</comment>
<comment type="catalytic activity">
    <reaction evidence="1">
        <text>L-homoserine + ATP = O-phospho-L-homoserine + ADP + H(+)</text>
        <dbReference type="Rhea" id="RHEA:13985"/>
        <dbReference type="ChEBI" id="CHEBI:15378"/>
        <dbReference type="ChEBI" id="CHEBI:30616"/>
        <dbReference type="ChEBI" id="CHEBI:57476"/>
        <dbReference type="ChEBI" id="CHEBI:57590"/>
        <dbReference type="ChEBI" id="CHEBI:456216"/>
        <dbReference type="EC" id="2.7.1.39"/>
    </reaction>
</comment>
<comment type="pathway">
    <text evidence="1">Amino-acid biosynthesis; L-threonine biosynthesis; L-threonine from L-aspartate: step 4/5.</text>
</comment>
<comment type="subcellular location">
    <subcellularLocation>
        <location evidence="1">Cytoplasm</location>
    </subcellularLocation>
</comment>
<comment type="similarity">
    <text evidence="1">Belongs to the GHMP kinase family. Homoserine kinase subfamily.</text>
</comment>
<sequence>MVVSVPATSANLGPGFDCLGLSLNLRNRFFIEPSNIHAVKLVGEGEGIPKFLTNNIFTKVFYEILKKHGNDGSFKFLLHNKVPITRGMGSSSAMIVGAVASAFAFLGFAFDRENILNTALIYENHPDNITPAVFGGYNAAFVEKKKVISLKTKIPSFLKAVMVIPNRVISTKQSRHLLPKRYSVQESVFNLSHASLMTMAIVQGKWDLLRCCSKDRMHQYKRMQTYPVLFAIQKLALENNALMSTLSGSGSSFFNMCYEEDAPKLKQVLSKKFPKFRVAVLDFDNDGVLIEKD</sequence>
<dbReference type="EC" id="2.7.1.39" evidence="1"/>
<dbReference type="EMBL" id="AE001439">
    <property type="protein sequence ID" value="AAD05950.1"/>
    <property type="molecule type" value="Genomic_DNA"/>
</dbReference>
<dbReference type="PIR" id="C71940">
    <property type="entry name" value="C71940"/>
</dbReference>
<dbReference type="RefSeq" id="WP_000261676.1">
    <property type="nucleotide sequence ID" value="NC_000921.1"/>
</dbReference>
<dbReference type="SMR" id="Q9ZM48"/>
<dbReference type="KEGG" id="hpj:jhp_0375"/>
<dbReference type="PATRIC" id="fig|85963.30.peg.636"/>
<dbReference type="eggNOG" id="COG0083">
    <property type="taxonomic scope" value="Bacteria"/>
</dbReference>
<dbReference type="UniPathway" id="UPA00050">
    <property type="reaction ID" value="UER00064"/>
</dbReference>
<dbReference type="Proteomes" id="UP000000804">
    <property type="component" value="Chromosome"/>
</dbReference>
<dbReference type="GO" id="GO:0005737">
    <property type="term" value="C:cytoplasm"/>
    <property type="evidence" value="ECO:0007669"/>
    <property type="project" value="UniProtKB-SubCell"/>
</dbReference>
<dbReference type="GO" id="GO:0005524">
    <property type="term" value="F:ATP binding"/>
    <property type="evidence" value="ECO:0007669"/>
    <property type="project" value="UniProtKB-UniRule"/>
</dbReference>
<dbReference type="GO" id="GO:0004413">
    <property type="term" value="F:homoserine kinase activity"/>
    <property type="evidence" value="ECO:0007669"/>
    <property type="project" value="UniProtKB-UniRule"/>
</dbReference>
<dbReference type="GO" id="GO:0009088">
    <property type="term" value="P:threonine biosynthetic process"/>
    <property type="evidence" value="ECO:0007669"/>
    <property type="project" value="UniProtKB-UniRule"/>
</dbReference>
<dbReference type="Gene3D" id="3.30.230.10">
    <property type="match status" value="1"/>
</dbReference>
<dbReference type="Gene3D" id="3.30.70.890">
    <property type="entry name" value="GHMP kinase, C-terminal domain"/>
    <property type="match status" value="1"/>
</dbReference>
<dbReference type="HAMAP" id="MF_00384">
    <property type="entry name" value="Homoser_kinase"/>
    <property type="match status" value="1"/>
</dbReference>
<dbReference type="InterPro" id="IPR013750">
    <property type="entry name" value="GHMP_kinase_C_dom"/>
</dbReference>
<dbReference type="InterPro" id="IPR036554">
    <property type="entry name" value="GHMP_kinase_C_sf"/>
</dbReference>
<dbReference type="InterPro" id="IPR006204">
    <property type="entry name" value="GHMP_kinase_N_dom"/>
</dbReference>
<dbReference type="InterPro" id="IPR006203">
    <property type="entry name" value="GHMP_knse_ATP-bd_CS"/>
</dbReference>
<dbReference type="InterPro" id="IPR000870">
    <property type="entry name" value="Homoserine_kinase"/>
</dbReference>
<dbReference type="InterPro" id="IPR020568">
    <property type="entry name" value="Ribosomal_Su5_D2-typ_SF"/>
</dbReference>
<dbReference type="InterPro" id="IPR014721">
    <property type="entry name" value="Ribsml_uS5_D2-typ_fold_subgr"/>
</dbReference>
<dbReference type="NCBIfam" id="TIGR00191">
    <property type="entry name" value="thrB"/>
    <property type="match status" value="1"/>
</dbReference>
<dbReference type="PANTHER" id="PTHR20861:SF1">
    <property type="entry name" value="HOMOSERINE KINASE"/>
    <property type="match status" value="1"/>
</dbReference>
<dbReference type="PANTHER" id="PTHR20861">
    <property type="entry name" value="HOMOSERINE/4-DIPHOSPHOCYTIDYL-2-C-METHYL-D-ERYTHRITOL KINASE"/>
    <property type="match status" value="1"/>
</dbReference>
<dbReference type="Pfam" id="PF08544">
    <property type="entry name" value="GHMP_kinases_C"/>
    <property type="match status" value="1"/>
</dbReference>
<dbReference type="Pfam" id="PF00288">
    <property type="entry name" value="GHMP_kinases_N"/>
    <property type="match status" value="1"/>
</dbReference>
<dbReference type="PIRSF" id="PIRSF000676">
    <property type="entry name" value="Homoser_kin"/>
    <property type="match status" value="1"/>
</dbReference>
<dbReference type="PRINTS" id="PR00958">
    <property type="entry name" value="HOMSERKINASE"/>
</dbReference>
<dbReference type="SUPFAM" id="SSF55060">
    <property type="entry name" value="GHMP Kinase, C-terminal domain"/>
    <property type="match status" value="1"/>
</dbReference>
<dbReference type="SUPFAM" id="SSF54211">
    <property type="entry name" value="Ribosomal protein S5 domain 2-like"/>
    <property type="match status" value="1"/>
</dbReference>
<dbReference type="PROSITE" id="PS00627">
    <property type="entry name" value="GHMP_KINASES_ATP"/>
    <property type="match status" value="1"/>
</dbReference>
<proteinExistence type="inferred from homology"/>
<organism>
    <name type="scientific">Helicobacter pylori (strain J99 / ATCC 700824)</name>
    <name type="common">Campylobacter pylori J99</name>
    <dbReference type="NCBI Taxonomy" id="85963"/>
    <lineage>
        <taxon>Bacteria</taxon>
        <taxon>Pseudomonadati</taxon>
        <taxon>Campylobacterota</taxon>
        <taxon>Epsilonproteobacteria</taxon>
        <taxon>Campylobacterales</taxon>
        <taxon>Helicobacteraceae</taxon>
        <taxon>Helicobacter</taxon>
    </lineage>
</organism>
<feature type="chain" id="PRO_0000156577" description="Homoserine kinase">
    <location>
        <begin position="1"/>
        <end position="293"/>
    </location>
</feature>
<feature type="binding site" evidence="1">
    <location>
        <begin position="83"/>
        <end position="93"/>
    </location>
    <ligand>
        <name>ATP</name>
        <dbReference type="ChEBI" id="CHEBI:30616"/>
    </ligand>
</feature>
<reference key="1">
    <citation type="journal article" date="1999" name="Nature">
        <title>Genomic sequence comparison of two unrelated isolates of the human gastric pathogen Helicobacter pylori.</title>
        <authorList>
            <person name="Alm R.A."/>
            <person name="Ling L.-S.L."/>
            <person name="Moir D.T."/>
            <person name="King B.L."/>
            <person name="Brown E.D."/>
            <person name="Doig P.C."/>
            <person name="Smith D.R."/>
            <person name="Noonan B."/>
            <person name="Guild B.C."/>
            <person name="deJonge B.L."/>
            <person name="Carmel G."/>
            <person name="Tummino P.J."/>
            <person name="Caruso A."/>
            <person name="Uria-Nickelsen M."/>
            <person name="Mills D.M."/>
            <person name="Ives C."/>
            <person name="Gibson R."/>
            <person name="Merberg D."/>
            <person name="Mills S.D."/>
            <person name="Jiang Q."/>
            <person name="Taylor D.E."/>
            <person name="Vovis G.F."/>
            <person name="Trust T.J."/>
        </authorList>
    </citation>
    <scope>NUCLEOTIDE SEQUENCE [LARGE SCALE GENOMIC DNA]</scope>
    <source>
        <strain>J99 / ATCC 700824</strain>
    </source>
</reference>
<name>KHSE_HELPJ</name>
<keyword id="KW-0028">Amino-acid biosynthesis</keyword>
<keyword id="KW-0067">ATP-binding</keyword>
<keyword id="KW-0963">Cytoplasm</keyword>
<keyword id="KW-0418">Kinase</keyword>
<keyword id="KW-0547">Nucleotide-binding</keyword>
<keyword id="KW-0791">Threonine biosynthesis</keyword>
<keyword id="KW-0808">Transferase</keyword>
<protein>
    <recommendedName>
        <fullName evidence="1">Homoserine kinase</fullName>
        <shortName evidence="1">HK</shortName>
        <shortName evidence="1">HSK</shortName>
        <ecNumber evidence="1">2.7.1.39</ecNumber>
    </recommendedName>
</protein>
<gene>
    <name evidence="1" type="primary">thrB</name>
    <name type="ordered locus">jhp_0375</name>
</gene>
<accession>Q9ZM48</accession>
<evidence type="ECO:0000255" key="1">
    <source>
        <dbReference type="HAMAP-Rule" id="MF_00384"/>
    </source>
</evidence>